<sequence length="245" mass="27979">MPYRKYREKKYETKYREAFKVFQEKIGITFTDEKLLIQAFTHSSYVNEHRKKPHEDNERLEFLGDAVLELTVSQYLFQKYPTMSEGELTKLRAAIVCEPSLVRFANELSFGSLVLLGKGEEMTGGRERPALLADVFEAFIGALYLDQGLETVWGFLKEIVYPKINEGAFSHVMDYKSQLQELIQRDGSGNIEYQILQEKGPAHNREFVSRVTLNNVALGLGSGKSKKEAEQQAAAEALKKLKEQL</sequence>
<evidence type="ECO:0000255" key="1">
    <source>
        <dbReference type="HAMAP-Rule" id="MF_00104"/>
    </source>
</evidence>
<comment type="function">
    <text evidence="1">Digests double-stranded RNA. Involved in the processing of primary rRNA transcript to yield the immediate precursors to the large and small rRNAs (23S and 16S). Processes some mRNAs, and tRNAs when they are encoded in the rRNA operon. Processes pre-crRNA and tracrRNA of type II CRISPR loci if present in the organism.</text>
</comment>
<comment type="catalytic activity">
    <reaction evidence="1">
        <text>Endonucleolytic cleavage to 5'-phosphomonoester.</text>
        <dbReference type="EC" id="3.1.26.3"/>
    </reaction>
</comment>
<comment type="cofactor">
    <cofactor evidence="1">
        <name>Mg(2+)</name>
        <dbReference type="ChEBI" id="CHEBI:18420"/>
    </cofactor>
</comment>
<comment type="subunit">
    <text evidence="1">Homodimer.</text>
</comment>
<comment type="subcellular location">
    <subcellularLocation>
        <location evidence="1">Cytoplasm</location>
    </subcellularLocation>
</comment>
<comment type="similarity">
    <text evidence="1">Belongs to the ribonuclease III family.</text>
</comment>
<reference key="1">
    <citation type="journal article" date="2004" name="Nucleic Acids Res.">
        <title>The genome sequence of Bacillus cereus ATCC 10987 reveals metabolic adaptations and a large plasmid related to Bacillus anthracis pXO1.</title>
        <authorList>
            <person name="Rasko D.A."/>
            <person name="Ravel J."/>
            <person name="Oekstad O.A."/>
            <person name="Helgason E."/>
            <person name="Cer R.Z."/>
            <person name="Jiang L."/>
            <person name="Shores K.A."/>
            <person name="Fouts D.E."/>
            <person name="Tourasse N.J."/>
            <person name="Angiuoli S.V."/>
            <person name="Kolonay J.F."/>
            <person name="Nelson W.C."/>
            <person name="Kolstoe A.-B."/>
            <person name="Fraser C.M."/>
            <person name="Read T.D."/>
        </authorList>
    </citation>
    <scope>NUCLEOTIDE SEQUENCE [LARGE SCALE GENOMIC DNA]</scope>
    <source>
        <strain>ATCC 10987 / NRS 248</strain>
    </source>
</reference>
<protein>
    <recommendedName>
        <fullName evidence="1">Ribonuclease 3</fullName>
        <ecNumber evidence="1">3.1.26.3</ecNumber>
    </recommendedName>
    <alternativeName>
        <fullName evidence="1">Ribonuclease III</fullName>
        <shortName evidence="1">RNase III</shortName>
    </alternativeName>
</protein>
<gene>
    <name evidence="1" type="primary">rnc</name>
    <name type="ordered locus">BCE_3891</name>
</gene>
<accession>Q732M1</accession>
<proteinExistence type="inferred from homology"/>
<dbReference type="EC" id="3.1.26.3" evidence="1"/>
<dbReference type="EMBL" id="AE017194">
    <property type="protein sequence ID" value="AAS42796.1"/>
    <property type="molecule type" value="Genomic_DNA"/>
</dbReference>
<dbReference type="SMR" id="Q732M1"/>
<dbReference type="KEGG" id="bca:BCE_3891"/>
<dbReference type="HOGENOM" id="CLU_000907_1_3_9"/>
<dbReference type="Proteomes" id="UP000002527">
    <property type="component" value="Chromosome"/>
</dbReference>
<dbReference type="GO" id="GO:0005737">
    <property type="term" value="C:cytoplasm"/>
    <property type="evidence" value="ECO:0007669"/>
    <property type="project" value="UniProtKB-SubCell"/>
</dbReference>
<dbReference type="GO" id="GO:0003725">
    <property type="term" value="F:double-stranded RNA binding"/>
    <property type="evidence" value="ECO:0007669"/>
    <property type="project" value="TreeGrafter"/>
</dbReference>
<dbReference type="GO" id="GO:0046872">
    <property type="term" value="F:metal ion binding"/>
    <property type="evidence" value="ECO:0007669"/>
    <property type="project" value="UniProtKB-KW"/>
</dbReference>
<dbReference type="GO" id="GO:0004525">
    <property type="term" value="F:ribonuclease III activity"/>
    <property type="evidence" value="ECO:0007669"/>
    <property type="project" value="UniProtKB-UniRule"/>
</dbReference>
<dbReference type="GO" id="GO:0019843">
    <property type="term" value="F:rRNA binding"/>
    <property type="evidence" value="ECO:0007669"/>
    <property type="project" value="UniProtKB-KW"/>
</dbReference>
<dbReference type="GO" id="GO:0006397">
    <property type="term" value="P:mRNA processing"/>
    <property type="evidence" value="ECO:0007669"/>
    <property type="project" value="UniProtKB-UniRule"/>
</dbReference>
<dbReference type="GO" id="GO:0010468">
    <property type="term" value="P:regulation of gene expression"/>
    <property type="evidence" value="ECO:0007669"/>
    <property type="project" value="TreeGrafter"/>
</dbReference>
<dbReference type="GO" id="GO:0006364">
    <property type="term" value="P:rRNA processing"/>
    <property type="evidence" value="ECO:0007669"/>
    <property type="project" value="UniProtKB-UniRule"/>
</dbReference>
<dbReference type="GO" id="GO:0008033">
    <property type="term" value="P:tRNA processing"/>
    <property type="evidence" value="ECO:0007669"/>
    <property type="project" value="UniProtKB-KW"/>
</dbReference>
<dbReference type="CDD" id="cd10845">
    <property type="entry name" value="DSRM_RNAse_III_family"/>
    <property type="match status" value="1"/>
</dbReference>
<dbReference type="CDD" id="cd00593">
    <property type="entry name" value="RIBOc"/>
    <property type="match status" value="1"/>
</dbReference>
<dbReference type="FunFam" id="1.10.1520.10:FF:000001">
    <property type="entry name" value="Ribonuclease 3"/>
    <property type="match status" value="1"/>
</dbReference>
<dbReference type="FunFam" id="3.30.160.20:FF:000003">
    <property type="entry name" value="Ribonuclease 3"/>
    <property type="match status" value="1"/>
</dbReference>
<dbReference type="Gene3D" id="3.30.160.20">
    <property type="match status" value="1"/>
</dbReference>
<dbReference type="Gene3D" id="1.10.1520.10">
    <property type="entry name" value="Ribonuclease III domain"/>
    <property type="match status" value="1"/>
</dbReference>
<dbReference type="HAMAP" id="MF_00104">
    <property type="entry name" value="RNase_III"/>
    <property type="match status" value="1"/>
</dbReference>
<dbReference type="InterPro" id="IPR014720">
    <property type="entry name" value="dsRBD_dom"/>
</dbReference>
<dbReference type="InterPro" id="IPR011907">
    <property type="entry name" value="RNase_III"/>
</dbReference>
<dbReference type="InterPro" id="IPR000999">
    <property type="entry name" value="RNase_III_dom"/>
</dbReference>
<dbReference type="InterPro" id="IPR036389">
    <property type="entry name" value="RNase_III_sf"/>
</dbReference>
<dbReference type="NCBIfam" id="TIGR02191">
    <property type="entry name" value="RNaseIII"/>
    <property type="match status" value="1"/>
</dbReference>
<dbReference type="PANTHER" id="PTHR11207:SF0">
    <property type="entry name" value="RIBONUCLEASE 3"/>
    <property type="match status" value="1"/>
</dbReference>
<dbReference type="PANTHER" id="PTHR11207">
    <property type="entry name" value="RIBONUCLEASE III"/>
    <property type="match status" value="1"/>
</dbReference>
<dbReference type="Pfam" id="PF00035">
    <property type="entry name" value="dsrm"/>
    <property type="match status" value="1"/>
</dbReference>
<dbReference type="Pfam" id="PF14622">
    <property type="entry name" value="Ribonucleas_3_3"/>
    <property type="match status" value="1"/>
</dbReference>
<dbReference type="SMART" id="SM00358">
    <property type="entry name" value="DSRM"/>
    <property type="match status" value="1"/>
</dbReference>
<dbReference type="SMART" id="SM00535">
    <property type="entry name" value="RIBOc"/>
    <property type="match status" value="1"/>
</dbReference>
<dbReference type="SUPFAM" id="SSF54768">
    <property type="entry name" value="dsRNA-binding domain-like"/>
    <property type="match status" value="1"/>
</dbReference>
<dbReference type="SUPFAM" id="SSF69065">
    <property type="entry name" value="RNase III domain-like"/>
    <property type="match status" value="1"/>
</dbReference>
<dbReference type="PROSITE" id="PS50137">
    <property type="entry name" value="DS_RBD"/>
    <property type="match status" value="1"/>
</dbReference>
<dbReference type="PROSITE" id="PS00517">
    <property type="entry name" value="RNASE_3_1"/>
    <property type="match status" value="1"/>
</dbReference>
<dbReference type="PROSITE" id="PS50142">
    <property type="entry name" value="RNASE_3_2"/>
    <property type="match status" value="1"/>
</dbReference>
<name>RNC_BACC1</name>
<feature type="chain" id="PRO_0000228491" description="Ribonuclease 3">
    <location>
        <begin position="1"/>
        <end position="245"/>
    </location>
</feature>
<feature type="domain" description="RNase III" evidence="1">
    <location>
        <begin position="19"/>
        <end position="148"/>
    </location>
</feature>
<feature type="domain" description="DRBM" evidence="1">
    <location>
        <begin position="174"/>
        <end position="243"/>
    </location>
</feature>
<feature type="active site" evidence="1">
    <location>
        <position position="65"/>
    </location>
</feature>
<feature type="active site" evidence="1">
    <location>
        <position position="137"/>
    </location>
</feature>
<feature type="binding site" evidence="1">
    <location>
        <position position="61"/>
    </location>
    <ligand>
        <name>Mg(2+)</name>
        <dbReference type="ChEBI" id="CHEBI:18420"/>
    </ligand>
</feature>
<feature type="binding site" evidence="1">
    <location>
        <position position="134"/>
    </location>
    <ligand>
        <name>Mg(2+)</name>
        <dbReference type="ChEBI" id="CHEBI:18420"/>
    </ligand>
</feature>
<feature type="binding site" evidence="1">
    <location>
        <position position="137"/>
    </location>
    <ligand>
        <name>Mg(2+)</name>
        <dbReference type="ChEBI" id="CHEBI:18420"/>
    </ligand>
</feature>
<organism>
    <name type="scientific">Bacillus cereus (strain ATCC 10987 / NRS 248)</name>
    <dbReference type="NCBI Taxonomy" id="222523"/>
    <lineage>
        <taxon>Bacteria</taxon>
        <taxon>Bacillati</taxon>
        <taxon>Bacillota</taxon>
        <taxon>Bacilli</taxon>
        <taxon>Bacillales</taxon>
        <taxon>Bacillaceae</taxon>
        <taxon>Bacillus</taxon>
        <taxon>Bacillus cereus group</taxon>
    </lineage>
</organism>
<keyword id="KW-0963">Cytoplasm</keyword>
<keyword id="KW-0255">Endonuclease</keyword>
<keyword id="KW-0378">Hydrolase</keyword>
<keyword id="KW-0460">Magnesium</keyword>
<keyword id="KW-0479">Metal-binding</keyword>
<keyword id="KW-0507">mRNA processing</keyword>
<keyword id="KW-0540">Nuclease</keyword>
<keyword id="KW-0694">RNA-binding</keyword>
<keyword id="KW-0698">rRNA processing</keyword>
<keyword id="KW-0699">rRNA-binding</keyword>
<keyword id="KW-0819">tRNA processing</keyword>